<accession>A6TWE6</accession>
<protein>
    <recommendedName>
        <fullName evidence="1">Small ribosomal subunit protein uS9</fullName>
    </recommendedName>
    <alternativeName>
        <fullName evidence="3">30S ribosomal protein S9</fullName>
    </alternativeName>
</protein>
<comment type="similarity">
    <text evidence="1">Belongs to the universal ribosomal protein uS9 family.</text>
</comment>
<proteinExistence type="inferred from homology"/>
<evidence type="ECO:0000255" key="1">
    <source>
        <dbReference type="HAMAP-Rule" id="MF_00532"/>
    </source>
</evidence>
<evidence type="ECO:0000256" key="2">
    <source>
        <dbReference type="SAM" id="MobiDB-lite"/>
    </source>
</evidence>
<evidence type="ECO:0000305" key="3"/>
<organism>
    <name type="scientific">Alkaliphilus metalliredigens (strain QYMF)</name>
    <dbReference type="NCBI Taxonomy" id="293826"/>
    <lineage>
        <taxon>Bacteria</taxon>
        <taxon>Bacillati</taxon>
        <taxon>Bacillota</taxon>
        <taxon>Clostridia</taxon>
        <taxon>Peptostreptococcales</taxon>
        <taxon>Natronincolaceae</taxon>
        <taxon>Alkaliphilus</taxon>
    </lineage>
</organism>
<reference key="1">
    <citation type="journal article" date="2016" name="Genome Announc.">
        <title>Complete genome sequence of Alkaliphilus metalliredigens strain QYMF, an alkaliphilic and metal-reducing bacterium isolated from borax-contaminated leachate ponds.</title>
        <authorList>
            <person name="Hwang C."/>
            <person name="Copeland A."/>
            <person name="Lucas S."/>
            <person name="Lapidus A."/>
            <person name="Barry K."/>
            <person name="Detter J.C."/>
            <person name="Glavina Del Rio T."/>
            <person name="Hammon N."/>
            <person name="Israni S."/>
            <person name="Dalin E."/>
            <person name="Tice H."/>
            <person name="Pitluck S."/>
            <person name="Chertkov O."/>
            <person name="Brettin T."/>
            <person name="Bruce D."/>
            <person name="Han C."/>
            <person name="Schmutz J."/>
            <person name="Larimer F."/>
            <person name="Land M.L."/>
            <person name="Hauser L."/>
            <person name="Kyrpides N."/>
            <person name="Mikhailova N."/>
            <person name="Ye Q."/>
            <person name="Zhou J."/>
            <person name="Richardson P."/>
            <person name="Fields M.W."/>
        </authorList>
    </citation>
    <scope>NUCLEOTIDE SEQUENCE [LARGE SCALE GENOMIC DNA]</scope>
    <source>
        <strain>QYMF</strain>
    </source>
</reference>
<feature type="chain" id="PRO_1000060998" description="Small ribosomal subunit protein uS9">
    <location>
        <begin position="1"/>
        <end position="130"/>
    </location>
</feature>
<feature type="region of interest" description="Disordered" evidence="2">
    <location>
        <begin position="109"/>
        <end position="130"/>
    </location>
</feature>
<feature type="compositionally biased region" description="Basic residues" evidence="2">
    <location>
        <begin position="111"/>
        <end position="130"/>
    </location>
</feature>
<dbReference type="EMBL" id="CP000724">
    <property type="protein sequence ID" value="ABR50514.1"/>
    <property type="molecule type" value="Genomic_DNA"/>
</dbReference>
<dbReference type="RefSeq" id="WP_012065406.1">
    <property type="nucleotide sequence ID" value="NC_009633.1"/>
</dbReference>
<dbReference type="SMR" id="A6TWE6"/>
<dbReference type="STRING" id="293826.Amet_4442"/>
<dbReference type="KEGG" id="amt:Amet_4442"/>
<dbReference type="eggNOG" id="COG0103">
    <property type="taxonomic scope" value="Bacteria"/>
</dbReference>
<dbReference type="HOGENOM" id="CLU_046483_2_1_9"/>
<dbReference type="OrthoDB" id="9803965at2"/>
<dbReference type="Proteomes" id="UP000001572">
    <property type="component" value="Chromosome"/>
</dbReference>
<dbReference type="GO" id="GO:0022627">
    <property type="term" value="C:cytosolic small ribosomal subunit"/>
    <property type="evidence" value="ECO:0007669"/>
    <property type="project" value="TreeGrafter"/>
</dbReference>
<dbReference type="GO" id="GO:0003723">
    <property type="term" value="F:RNA binding"/>
    <property type="evidence" value="ECO:0007669"/>
    <property type="project" value="TreeGrafter"/>
</dbReference>
<dbReference type="GO" id="GO:0003735">
    <property type="term" value="F:structural constituent of ribosome"/>
    <property type="evidence" value="ECO:0007669"/>
    <property type="project" value="InterPro"/>
</dbReference>
<dbReference type="GO" id="GO:0006412">
    <property type="term" value="P:translation"/>
    <property type="evidence" value="ECO:0007669"/>
    <property type="project" value="UniProtKB-UniRule"/>
</dbReference>
<dbReference type="FunFam" id="3.30.230.10:FF:000001">
    <property type="entry name" value="30S ribosomal protein S9"/>
    <property type="match status" value="1"/>
</dbReference>
<dbReference type="Gene3D" id="3.30.230.10">
    <property type="match status" value="1"/>
</dbReference>
<dbReference type="HAMAP" id="MF_00532_B">
    <property type="entry name" value="Ribosomal_uS9_B"/>
    <property type="match status" value="1"/>
</dbReference>
<dbReference type="InterPro" id="IPR020568">
    <property type="entry name" value="Ribosomal_Su5_D2-typ_SF"/>
</dbReference>
<dbReference type="InterPro" id="IPR000754">
    <property type="entry name" value="Ribosomal_uS9"/>
</dbReference>
<dbReference type="InterPro" id="IPR023035">
    <property type="entry name" value="Ribosomal_uS9_bac/plastid"/>
</dbReference>
<dbReference type="InterPro" id="IPR020574">
    <property type="entry name" value="Ribosomal_uS9_CS"/>
</dbReference>
<dbReference type="InterPro" id="IPR014721">
    <property type="entry name" value="Ribsml_uS5_D2-typ_fold_subgr"/>
</dbReference>
<dbReference type="NCBIfam" id="NF001099">
    <property type="entry name" value="PRK00132.1"/>
    <property type="match status" value="1"/>
</dbReference>
<dbReference type="PANTHER" id="PTHR21569">
    <property type="entry name" value="RIBOSOMAL PROTEIN S9"/>
    <property type="match status" value="1"/>
</dbReference>
<dbReference type="PANTHER" id="PTHR21569:SF1">
    <property type="entry name" value="SMALL RIBOSOMAL SUBUNIT PROTEIN US9M"/>
    <property type="match status" value="1"/>
</dbReference>
<dbReference type="Pfam" id="PF00380">
    <property type="entry name" value="Ribosomal_S9"/>
    <property type="match status" value="1"/>
</dbReference>
<dbReference type="SUPFAM" id="SSF54211">
    <property type="entry name" value="Ribosomal protein S5 domain 2-like"/>
    <property type="match status" value="1"/>
</dbReference>
<dbReference type="PROSITE" id="PS00360">
    <property type="entry name" value="RIBOSOMAL_S9"/>
    <property type="match status" value="1"/>
</dbReference>
<gene>
    <name evidence="1" type="primary">rpsI</name>
    <name type="ordered locus">Amet_4442</name>
</gene>
<keyword id="KW-1185">Reference proteome</keyword>
<keyword id="KW-0687">Ribonucleoprotein</keyword>
<keyword id="KW-0689">Ribosomal protein</keyword>
<sequence length="130" mass="14742">MARVTYYGTGRRKNAIARVRLVPGEGNITINKRNIEEYFNYETLRRDVRLPLELTETLSQFDVLATVNGGGYTGQAGALRHGIARALLKADDELRPALKKAGYLTRDSRMKERKKYGLKGARRAPQFSKR</sequence>
<name>RS9_ALKMQ</name>